<accession>P54834</accession>
<accession>Q7YRB8</accession>
<sequence>MLLAALCCLLWSFRTSTGHFPRACASSKSLMEKECCPPWSGDGSPCGQLSGRGACQDIILSNAPFGPQFPFTGVDDRESWPSVFYNRTCQCFGNFMGFNCGNCKFGFWGQNCTEKRLLVRKNIFDLSVPEKNKFLAYLTLAKHTTSPDYVIPTGTYGQMNNGSTPMFNDINIYDLFVWMHYYVSRDTLLGGSEIWKDIDFAHEAPGFLPWHRLFLLLWEQEIQKLTGDENFTIPYWDWRDAKSCDICTDEYMGGRNPANPNLLSPASFFSSWQIVCTRLEEYNSRQALCDGTPEGPLLRNPGNHDKARTPRLPSSADVEFCLSLTQYESDSMDKAANFSFRNTLEGFASPLTGIADASQSSMHNALHIYMNGTMSQVPGSANDPIFLLHHAFVDSIFEQWLRRHHPLREVYPEANAPIGHNRESYMVPFIPLYRNGDLFISSRDLGYDYSNLQESERDIFQDYIKPYLEQASRIWPWLIGAAVVGCVVTAVLGGLTSLLCRRNRKQLHEEKQPLLMEKEDYHSLLYQTHL</sequence>
<feature type="signal peptide" evidence="4">
    <location>
        <begin position="1"/>
        <end position="18"/>
    </location>
</feature>
<feature type="chain" id="PRO_0000035877" description="Tyrosinase">
    <location>
        <begin position="19"/>
        <end position="530"/>
    </location>
</feature>
<feature type="topological domain" description="Lumenal, melanosome" evidence="4">
    <location>
        <begin position="19"/>
        <end position="473"/>
    </location>
</feature>
<feature type="transmembrane region" description="Helical" evidence="4">
    <location>
        <begin position="474"/>
        <end position="494"/>
    </location>
</feature>
<feature type="topological domain" description="Cytoplasmic" evidence="4">
    <location>
        <begin position="495"/>
        <end position="530"/>
    </location>
</feature>
<feature type="binding site" evidence="3">
    <location>
        <position position="180"/>
    </location>
    <ligand>
        <name>Cu cation</name>
        <dbReference type="ChEBI" id="CHEBI:23378"/>
        <label>A</label>
    </ligand>
</feature>
<feature type="binding site" evidence="3">
    <location>
        <position position="202"/>
    </location>
    <ligand>
        <name>Cu cation</name>
        <dbReference type="ChEBI" id="CHEBI:23378"/>
        <label>A</label>
    </ligand>
</feature>
<feature type="binding site" evidence="3">
    <location>
        <position position="211"/>
    </location>
    <ligand>
        <name>Cu cation</name>
        <dbReference type="ChEBI" id="CHEBI:23378"/>
        <label>A</label>
    </ligand>
</feature>
<feature type="binding site" evidence="3">
    <location>
        <position position="363"/>
    </location>
    <ligand>
        <name>Cu cation</name>
        <dbReference type="ChEBI" id="CHEBI:23378"/>
        <label>B</label>
    </ligand>
</feature>
<feature type="binding site" evidence="3">
    <location>
        <position position="367"/>
    </location>
    <ligand>
        <name>Cu cation</name>
        <dbReference type="ChEBI" id="CHEBI:23378"/>
        <label>B</label>
    </ligand>
</feature>
<feature type="binding site" evidence="3">
    <location>
        <position position="390"/>
    </location>
    <ligand>
        <name>Cu cation</name>
        <dbReference type="ChEBI" id="CHEBI:23378"/>
        <label>B</label>
    </ligand>
</feature>
<feature type="glycosylation site" description="N-linked (GlcNAc...) asparagine" evidence="4">
    <location>
        <position position="86"/>
    </location>
</feature>
<feature type="glycosylation site" description="N-linked (GlcNAc...) asparagine" evidence="4">
    <location>
        <position position="111"/>
    </location>
</feature>
<feature type="glycosylation site" description="N-linked (GlcNAc...) asparagine" evidence="4">
    <location>
        <position position="161"/>
    </location>
</feature>
<feature type="glycosylation site" description="N-linked (GlcNAc...) asparagine" evidence="4">
    <location>
        <position position="230"/>
    </location>
</feature>
<feature type="glycosylation site" description="N-linked (GlcNAc...) asparagine" evidence="4">
    <location>
        <position position="337"/>
    </location>
</feature>
<feature type="glycosylation site" description="N-linked (GlcNAc...) asparagine" evidence="4">
    <location>
        <position position="371"/>
    </location>
</feature>
<feature type="sequence conflict" description="In Ref. 2; AAA86420." evidence="5" ref="2">
    <original>L</original>
    <variation>V</variation>
    <location>
        <position position="3"/>
    </location>
</feature>
<feature type="sequence conflict" description="In Ref. 2; AAA86420." evidence="5" ref="2">
    <original>C</original>
    <variation>R</variation>
    <location>
        <position position="7"/>
    </location>
</feature>
<feature type="sequence conflict" description="In Ref. 2; AAA86420." evidence="5" ref="2">
    <original>I</original>
    <variation>V</variation>
    <location>
        <position position="59"/>
    </location>
</feature>
<feature type="sequence conflict" description="In Ref. 2; AAA86420." evidence="5" ref="2">
    <original>K</original>
    <variation>R</variation>
    <location>
        <position position="115"/>
    </location>
</feature>
<feature type="sequence conflict" description="In Ref. 2; AAA86420." evidence="5" ref="2">
    <original>N</original>
    <variation>D</variation>
    <location>
        <position position="132"/>
    </location>
</feature>
<feature type="sequence conflict" description="In Ref. 2; AAA86420." evidence="5" ref="2">
    <original>R</original>
    <variation>T</variation>
    <location>
        <position position="212"/>
    </location>
</feature>
<dbReference type="EC" id="1.14.18.1"/>
<dbReference type="EMBL" id="AY336053">
    <property type="protein sequence ID" value="AAQ17535.1"/>
    <property type="molecule type" value="mRNA"/>
</dbReference>
<dbReference type="EMBL" id="U42219">
    <property type="protein sequence ID" value="AAA86420.1"/>
    <property type="molecule type" value="Genomic_DNA"/>
</dbReference>
<dbReference type="RefSeq" id="NP_001002941.1">
    <property type="nucleotide sequence ID" value="NM_001002941.1"/>
</dbReference>
<dbReference type="SMR" id="P54834"/>
<dbReference type="FunCoup" id="P54834">
    <property type="interactions" value="11"/>
</dbReference>
<dbReference type="STRING" id="9615.ENSCAFP00000006504"/>
<dbReference type="GlyCosmos" id="P54834">
    <property type="glycosylation" value="6 sites, No reported glycans"/>
</dbReference>
<dbReference type="PaxDb" id="9612-ENSCAFP00000006504"/>
<dbReference type="GeneID" id="403405"/>
<dbReference type="KEGG" id="cfa:403405"/>
<dbReference type="CTD" id="7299"/>
<dbReference type="eggNOG" id="ENOG502QRET">
    <property type="taxonomic scope" value="Eukaryota"/>
</dbReference>
<dbReference type="InParanoid" id="P54834"/>
<dbReference type="OrthoDB" id="6132182at2759"/>
<dbReference type="Proteomes" id="UP000002254">
    <property type="component" value="Unplaced"/>
</dbReference>
<dbReference type="Proteomes" id="UP000694429">
    <property type="component" value="Unplaced"/>
</dbReference>
<dbReference type="Proteomes" id="UP000694542">
    <property type="component" value="Unplaced"/>
</dbReference>
<dbReference type="Proteomes" id="UP000805418">
    <property type="component" value="Unplaced"/>
</dbReference>
<dbReference type="GO" id="GO:0042470">
    <property type="term" value="C:melanosome"/>
    <property type="evidence" value="ECO:0000250"/>
    <property type="project" value="UniProtKB"/>
</dbReference>
<dbReference type="GO" id="GO:0033162">
    <property type="term" value="C:melanosome membrane"/>
    <property type="evidence" value="ECO:0007669"/>
    <property type="project" value="UniProtKB-SubCell"/>
</dbReference>
<dbReference type="GO" id="GO:0046872">
    <property type="term" value="F:metal ion binding"/>
    <property type="evidence" value="ECO:0007669"/>
    <property type="project" value="UniProtKB-KW"/>
</dbReference>
<dbReference type="GO" id="GO:0004503">
    <property type="term" value="F:tyrosinase activity"/>
    <property type="evidence" value="ECO:0000318"/>
    <property type="project" value="GO_Central"/>
</dbReference>
<dbReference type="GO" id="GO:0042438">
    <property type="term" value="P:melanin biosynthetic process"/>
    <property type="evidence" value="ECO:0000318"/>
    <property type="project" value="GO_Central"/>
</dbReference>
<dbReference type="GO" id="GO:0043473">
    <property type="term" value="P:pigmentation"/>
    <property type="evidence" value="ECO:0000318"/>
    <property type="project" value="GO_Central"/>
</dbReference>
<dbReference type="GO" id="GO:0009637">
    <property type="term" value="P:response to blue light"/>
    <property type="evidence" value="ECO:0000250"/>
    <property type="project" value="UniProtKB"/>
</dbReference>
<dbReference type="FunFam" id="1.10.1280.10:FF:000003">
    <property type="entry name" value="Tyrosinase"/>
    <property type="match status" value="1"/>
</dbReference>
<dbReference type="Gene3D" id="1.10.1280.10">
    <property type="entry name" value="Di-copper center containing domain from catechol oxidase"/>
    <property type="match status" value="1"/>
</dbReference>
<dbReference type="InterPro" id="IPR008922">
    <property type="entry name" value="Di-copper_centre_dom_sf"/>
</dbReference>
<dbReference type="InterPro" id="IPR050316">
    <property type="entry name" value="Tyrosinase/Hemocyanin"/>
</dbReference>
<dbReference type="InterPro" id="IPR002227">
    <property type="entry name" value="Tyrosinase_Cu-bd"/>
</dbReference>
<dbReference type="PANTHER" id="PTHR11474:SF124">
    <property type="entry name" value="TYROSINASE"/>
    <property type="match status" value="1"/>
</dbReference>
<dbReference type="PANTHER" id="PTHR11474">
    <property type="entry name" value="TYROSINASE FAMILY MEMBER"/>
    <property type="match status" value="1"/>
</dbReference>
<dbReference type="Pfam" id="PF00264">
    <property type="entry name" value="Tyrosinase"/>
    <property type="match status" value="1"/>
</dbReference>
<dbReference type="PRINTS" id="PR00092">
    <property type="entry name" value="TYROSINASE"/>
</dbReference>
<dbReference type="SUPFAM" id="SSF48056">
    <property type="entry name" value="Di-copper centre-containing domain"/>
    <property type="match status" value="1"/>
</dbReference>
<dbReference type="PROSITE" id="PS00497">
    <property type="entry name" value="TYROSINASE_1"/>
    <property type="match status" value="1"/>
</dbReference>
<dbReference type="PROSITE" id="PS00498">
    <property type="entry name" value="TYROSINASE_2"/>
    <property type="match status" value="1"/>
</dbReference>
<comment type="function">
    <text evidence="1">This is a copper-containing oxidase that functions in the formation of pigments such as melanins and other polyphenolic compounds (By similarity). Catalyzes the initial and rate limiting step in the cascade of reactions leading to melanin production from tyrosine (By similarity). In addition to hydroxylating tyrosine to DOPA (3,4-dihydroxyphenylalanine), also catalyzes the oxidation of DOPA to DOPA-quinone, and possibly the oxidation of DHI (5,6-dihydroxyindole) to indole-5,6 quinone (By similarity).</text>
</comment>
<comment type="catalytic activity">
    <reaction evidence="1">
        <text>2 L-dopa + O2 = 2 L-dopaquinone + 2 H2O</text>
        <dbReference type="Rhea" id="RHEA:34287"/>
        <dbReference type="ChEBI" id="CHEBI:15377"/>
        <dbReference type="ChEBI" id="CHEBI:15379"/>
        <dbReference type="ChEBI" id="CHEBI:57504"/>
        <dbReference type="ChEBI" id="CHEBI:57924"/>
        <dbReference type="EC" id="1.14.18.1"/>
    </reaction>
</comment>
<comment type="catalytic activity">
    <reaction evidence="1">
        <text>L-tyrosine + O2 = L-dopaquinone + H2O</text>
        <dbReference type="Rhea" id="RHEA:18117"/>
        <dbReference type="ChEBI" id="CHEBI:15377"/>
        <dbReference type="ChEBI" id="CHEBI:15379"/>
        <dbReference type="ChEBI" id="CHEBI:57924"/>
        <dbReference type="ChEBI" id="CHEBI:58315"/>
        <dbReference type="EC" id="1.14.18.1"/>
    </reaction>
</comment>
<comment type="catalytic activity">
    <reaction evidence="2">
        <text>2 5,6-dihydroxyindole-2-carboxylate + O2 = 2 indole-5,6-quinone-2-carboxylate + 2 H2O</text>
        <dbReference type="Rhea" id="RHEA:68388"/>
        <dbReference type="ChEBI" id="CHEBI:15377"/>
        <dbReference type="ChEBI" id="CHEBI:15379"/>
        <dbReference type="ChEBI" id="CHEBI:16875"/>
        <dbReference type="ChEBI" id="CHEBI:177869"/>
    </reaction>
    <physiologicalReaction direction="left-to-right" evidence="2">
        <dbReference type="Rhea" id="RHEA:68389"/>
    </physiologicalReaction>
</comment>
<comment type="cofactor">
    <cofactor evidence="3">
        <name>Cu(2+)</name>
        <dbReference type="ChEBI" id="CHEBI:29036"/>
    </cofactor>
    <text evidence="3">Binds 2 copper ions per subunit.</text>
</comment>
<comment type="subunit">
    <text evidence="2">Forms an OPN3-dependent complex with DCT in response to blue light in melanocytes.</text>
</comment>
<comment type="subcellular location">
    <subcellularLocation>
        <location evidence="2">Melanosome membrane</location>
        <topology evidence="2">Single-pass type I membrane protein</topology>
    </subcellularLocation>
    <subcellularLocation>
        <location evidence="1">Melanosome</location>
    </subcellularLocation>
    <text evidence="1">Proper trafficking to melanosome is regulated by SGSM2, ANKRD27, RAB9A, RAB32 and RAB38.</text>
</comment>
<comment type="PTM">
    <text evidence="1">Glycosylated.</text>
</comment>
<comment type="similarity">
    <text evidence="5">Belongs to the tyrosinase family.</text>
</comment>
<comment type="online information" name="Protein Spotlight">
    <link uri="https://www.proteinspotlight.org/back_issues/049"/>
    <text>Snowy stardom - Issue 49 of August 2004</text>
</comment>
<protein>
    <recommendedName>
        <fullName>Tyrosinase</fullName>
        <ecNumber>1.14.18.1</ecNumber>
    </recommendedName>
    <alternativeName>
        <fullName>Monophenol monooxygenase</fullName>
    </alternativeName>
</protein>
<keyword id="KW-0186">Copper</keyword>
<keyword id="KW-0325">Glycoprotein</keyword>
<keyword id="KW-0470">Melanin biosynthesis</keyword>
<keyword id="KW-0472">Membrane</keyword>
<keyword id="KW-0479">Metal-binding</keyword>
<keyword id="KW-0503">Monooxygenase</keyword>
<keyword id="KW-0560">Oxidoreductase</keyword>
<keyword id="KW-1185">Reference proteome</keyword>
<keyword id="KW-0732">Signal</keyword>
<keyword id="KW-0812">Transmembrane</keyword>
<keyword id="KW-1133">Transmembrane helix</keyword>
<name>TYRO_CANLF</name>
<proteinExistence type="evidence at transcript level"/>
<gene>
    <name type="primary">TYR</name>
</gene>
<organism>
    <name type="scientific">Canis lupus familiaris</name>
    <name type="common">Dog</name>
    <name type="synonym">Canis familiaris</name>
    <dbReference type="NCBI Taxonomy" id="9615"/>
    <lineage>
        <taxon>Eukaryota</taxon>
        <taxon>Metazoa</taxon>
        <taxon>Chordata</taxon>
        <taxon>Craniata</taxon>
        <taxon>Vertebrata</taxon>
        <taxon>Euteleostomi</taxon>
        <taxon>Mammalia</taxon>
        <taxon>Eutheria</taxon>
        <taxon>Laurasiatheria</taxon>
        <taxon>Carnivora</taxon>
        <taxon>Caniformia</taxon>
        <taxon>Canidae</taxon>
        <taxon>Canis</taxon>
    </lineage>
</organism>
<reference key="1">
    <citation type="submission" date="2003-07" db="EMBL/GenBank/DDBJ databases">
        <authorList>
            <person name="Schmutz S.M."/>
            <person name="Berryere T.G."/>
        </authorList>
    </citation>
    <scope>NUCLEOTIDE SEQUENCE [MRNA]</scope>
    <source>
        <strain>Doberman pinscher</strain>
        <tissue>Skin</tissue>
    </source>
</reference>
<reference key="2">
    <citation type="submission" date="1996-02" db="EMBL/GenBank/DDBJ databases">
        <title>Cloning and chromosomal in situ hybridization of the dog tyrosinase exon 1.</title>
        <authorList>
            <person name="Tang Q."/>
            <person name="Williams R.W."/>
            <person name="Hogan D."/>
            <person name="Valentine V."/>
            <person name="Goldowitz D."/>
        </authorList>
    </citation>
    <scope>NUCLEOTIDE SEQUENCE [GENOMIC DNA] OF 1-273</scope>
</reference>
<evidence type="ECO:0000250" key="1">
    <source>
        <dbReference type="UniProtKB" id="P11344"/>
    </source>
</evidence>
<evidence type="ECO:0000250" key="2">
    <source>
        <dbReference type="UniProtKB" id="P14679"/>
    </source>
</evidence>
<evidence type="ECO:0000250" key="3">
    <source>
        <dbReference type="UniProtKB" id="Q9ZP19"/>
    </source>
</evidence>
<evidence type="ECO:0000255" key="4"/>
<evidence type="ECO:0000305" key="5"/>